<evidence type="ECO:0000250" key="1"/>
<evidence type="ECO:0000255" key="2"/>
<evidence type="ECO:0000269" key="3">
    <source>
    </source>
</evidence>
<evidence type="ECO:0000269" key="4">
    <source>
    </source>
</evidence>
<evidence type="ECO:0000305" key="5"/>
<organism>
    <name type="scientific">Drosophila melanogaster</name>
    <name type="common">Fruit fly</name>
    <dbReference type="NCBI Taxonomy" id="7227"/>
    <lineage>
        <taxon>Eukaryota</taxon>
        <taxon>Metazoa</taxon>
        <taxon>Ecdysozoa</taxon>
        <taxon>Arthropoda</taxon>
        <taxon>Hexapoda</taxon>
        <taxon>Insecta</taxon>
        <taxon>Pterygota</taxon>
        <taxon>Neoptera</taxon>
        <taxon>Endopterygota</taxon>
        <taxon>Diptera</taxon>
        <taxon>Brachycera</taxon>
        <taxon>Muscomorpha</taxon>
        <taxon>Ephydroidea</taxon>
        <taxon>Drosophilidae</taxon>
        <taxon>Drosophila</taxon>
        <taxon>Sophophora</taxon>
    </lineage>
</organism>
<proteinExistence type="evidence at transcript level"/>
<reference key="1">
    <citation type="journal article" date="2000" name="Science">
        <title>The genome sequence of Drosophila melanogaster.</title>
        <authorList>
            <person name="Adams M.D."/>
            <person name="Celniker S.E."/>
            <person name="Holt R.A."/>
            <person name="Evans C.A."/>
            <person name="Gocayne J.D."/>
            <person name="Amanatides P.G."/>
            <person name="Scherer S.E."/>
            <person name="Li P.W."/>
            <person name="Hoskins R.A."/>
            <person name="Galle R.F."/>
            <person name="George R.A."/>
            <person name="Lewis S.E."/>
            <person name="Richards S."/>
            <person name="Ashburner M."/>
            <person name="Henderson S.N."/>
            <person name="Sutton G.G."/>
            <person name="Wortman J.R."/>
            <person name="Yandell M.D."/>
            <person name="Zhang Q."/>
            <person name="Chen L.X."/>
            <person name="Brandon R.C."/>
            <person name="Rogers Y.-H.C."/>
            <person name="Blazej R.G."/>
            <person name="Champe M."/>
            <person name="Pfeiffer B.D."/>
            <person name="Wan K.H."/>
            <person name="Doyle C."/>
            <person name="Baxter E.G."/>
            <person name="Helt G."/>
            <person name="Nelson C.R."/>
            <person name="Miklos G.L.G."/>
            <person name="Abril J.F."/>
            <person name="Agbayani A."/>
            <person name="An H.-J."/>
            <person name="Andrews-Pfannkoch C."/>
            <person name="Baldwin D."/>
            <person name="Ballew R.M."/>
            <person name="Basu A."/>
            <person name="Baxendale J."/>
            <person name="Bayraktaroglu L."/>
            <person name="Beasley E.M."/>
            <person name="Beeson K.Y."/>
            <person name="Benos P.V."/>
            <person name="Berman B.P."/>
            <person name="Bhandari D."/>
            <person name="Bolshakov S."/>
            <person name="Borkova D."/>
            <person name="Botchan M.R."/>
            <person name="Bouck J."/>
            <person name="Brokstein P."/>
            <person name="Brottier P."/>
            <person name="Burtis K.C."/>
            <person name="Busam D.A."/>
            <person name="Butler H."/>
            <person name="Cadieu E."/>
            <person name="Center A."/>
            <person name="Chandra I."/>
            <person name="Cherry J.M."/>
            <person name="Cawley S."/>
            <person name="Dahlke C."/>
            <person name="Davenport L.B."/>
            <person name="Davies P."/>
            <person name="de Pablos B."/>
            <person name="Delcher A."/>
            <person name="Deng Z."/>
            <person name="Mays A.D."/>
            <person name="Dew I."/>
            <person name="Dietz S.M."/>
            <person name="Dodson K."/>
            <person name="Doup L.E."/>
            <person name="Downes M."/>
            <person name="Dugan-Rocha S."/>
            <person name="Dunkov B.C."/>
            <person name="Dunn P."/>
            <person name="Durbin K.J."/>
            <person name="Evangelista C.C."/>
            <person name="Ferraz C."/>
            <person name="Ferriera S."/>
            <person name="Fleischmann W."/>
            <person name="Fosler C."/>
            <person name="Gabrielian A.E."/>
            <person name="Garg N.S."/>
            <person name="Gelbart W.M."/>
            <person name="Glasser K."/>
            <person name="Glodek A."/>
            <person name="Gong F."/>
            <person name="Gorrell J.H."/>
            <person name="Gu Z."/>
            <person name="Guan P."/>
            <person name="Harris M."/>
            <person name="Harris N.L."/>
            <person name="Harvey D.A."/>
            <person name="Heiman T.J."/>
            <person name="Hernandez J.R."/>
            <person name="Houck J."/>
            <person name="Hostin D."/>
            <person name="Houston K.A."/>
            <person name="Howland T.J."/>
            <person name="Wei M.-H."/>
            <person name="Ibegwam C."/>
            <person name="Jalali M."/>
            <person name="Kalush F."/>
            <person name="Karpen G.H."/>
            <person name="Ke Z."/>
            <person name="Kennison J.A."/>
            <person name="Ketchum K.A."/>
            <person name="Kimmel B.E."/>
            <person name="Kodira C.D."/>
            <person name="Kraft C.L."/>
            <person name="Kravitz S."/>
            <person name="Kulp D."/>
            <person name="Lai Z."/>
            <person name="Lasko P."/>
            <person name="Lei Y."/>
            <person name="Levitsky A.A."/>
            <person name="Li J.H."/>
            <person name="Li Z."/>
            <person name="Liang Y."/>
            <person name="Lin X."/>
            <person name="Liu X."/>
            <person name="Mattei B."/>
            <person name="McIntosh T.C."/>
            <person name="McLeod M.P."/>
            <person name="McPherson D."/>
            <person name="Merkulov G."/>
            <person name="Milshina N.V."/>
            <person name="Mobarry C."/>
            <person name="Morris J."/>
            <person name="Moshrefi A."/>
            <person name="Mount S.M."/>
            <person name="Moy M."/>
            <person name="Murphy B."/>
            <person name="Murphy L."/>
            <person name="Muzny D.M."/>
            <person name="Nelson D.L."/>
            <person name="Nelson D.R."/>
            <person name="Nelson K.A."/>
            <person name="Nixon K."/>
            <person name="Nusskern D.R."/>
            <person name="Pacleb J.M."/>
            <person name="Palazzolo M."/>
            <person name="Pittman G.S."/>
            <person name="Pan S."/>
            <person name="Pollard J."/>
            <person name="Puri V."/>
            <person name="Reese M.G."/>
            <person name="Reinert K."/>
            <person name="Remington K."/>
            <person name="Saunders R.D.C."/>
            <person name="Scheeler F."/>
            <person name="Shen H."/>
            <person name="Shue B.C."/>
            <person name="Siden-Kiamos I."/>
            <person name="Simpson M."/>
            <person name="Skupski M.P."/>
            <person name="Smith T.J."/>
            <person name="Spier E."/>
            <person name="Spradling A.C."/>
            <person name="Stapleton M."/>
            <person name="Strong R."/>
            <person name="Sun E."/>
            <person name="Svirskas R."/>
            <person name="Tector C."/>
            <person name="Turner R."/>
            <person name="Venter E."/>
            <person name="Wang A.H."/>
            <person name="Wang X."/>
            <person name="Wang Z.-Y."/>
            <person name="Wassarman D.A."/>
            <person name="Weinstock G.M."/>
            <person name="Weissenbach J."/>
            <person name="Williams S.M."/>
            <person name="Woodage T."/>
            <person name="Worley K.C."/>
            <person name="Wu D."/>
            <person name="Yang S."/>
            <person name="Yao Q.A."/>
            <person name="Ye J."/>
            <person name="Yeh R.-F."/>
            <person name="Zaveri J.S."/>
            <person name="Zhan M."/>
            <person name="Zhang G."/>
            <person name="Zhao Q."/>
            <person name="Zheng L."/>
            <person name="Zheng X.H."/>
            <person name="Zhong F.N."/>
            <person name="Zhong W."/>
            <person name="Zhou X."/>
            <person name="Zhu S.C."/>
            <person name="Zhu X."/>
            <person name="Smith H.O."/>
            <person name="Gibbs R.A."/>
            <person name="Myers E.W."/>
            <person name="Rubin G.M."/>
            <person name="Venter J.C."/>
        </authorList>
    </citation>
    <scope>NUCLEOTIDE SEQUENCE [LARGE SCALE GENOMIC DNA]</scope>
    <source>
        <strain>Berkeley</strain>
    </source>
</reference>
<reference key="2">
    <citation type="journal article" date="2002" name="Genome Biol.">
        <title>Annotation of the Drosophila melanogaster euchromatic genome: a systematic review.</title>
        <authorList>
            <person name="Misra S."/>
            <person name="Crosby M.A."/>
            <person name="Mungall C.J."/>
            <person name="Matthews B.B."/>
            <person name="Campbell K.S."/>
            <person name="Hradecky P."/>
            <person name="Huang Y."/>
            <person name="Kaminker J.S."/>
            <person name="Millburn G.H."/>
            <person name="Prochnik S.E."/>
            <person name="Smith C.D."/>
            <person name="Tupy J.L."/>
            <person name="Whitfield E.J."/>
            <person name="Bayraktaroglu L."/>
            <person name="Berman B.P."/>
            <person name="Bettencourt B.R."/>
            <person name="Celniker S.E."/>
            <person name="de Grey A.D.N.J."/>
            <person name="Drysdale R.A."/>
            <person name="Harris N.L."/>
            <person name="Richter J."/>
            <person name="Russo S."/>
            <person name="Schroeder A.J."/>
            <person name="Shu S.Q."/>
            <person name="Stapleton M."/>
            <person name="Yamada C."/>
            <person name="Ashburner M."/>
            <person name="Gelbart W.M."/>
            <person name="Rubin G.M."/>
            <person name="Lewis S.E."/>
        </authorList>
    </citation>
    <scope>GENOME REANNOTATION</scope>
    <source>
        <strain>Berkeley</strain>
    </source>
</reference>
<reference key="3">
    <citation type="journal article" date="2001" name="Curr. Biol.">
        <title>Spatially restricted expression of candidate taste receptors in the Drosophila gustatory system.</title>
        <authorList>
            <person name="Dunipace L."/>
            <person name="Meister S."/>
            <person name="McNealy C."/>
            <person name="Amrein H."/>
        </authorList>
    </citation>
    <scope>IDENTIFICATION</scope>
    <scope>TISSUE SPECIFICITY</scope>
</reference>
<reference key="4">
    <citation type="journal article" date="2004" name="Curr. Biol.">
        <title>Taste perception and coding in Drosophila.</title>
        <authorList>
            <person name="Thorne N."/>
            <person name="Chromey C."/>
            <person name="Bray S."/>
            <person name="Amrein H."/>
        </authorList>
    </citation>
    <scope>TISSUE SPECIFICITY</scope>
</reference>
<gene>
    <name type="primary">Gr22f</name>
    <name type="ORF">CG31932</name>
</gene>
<dbReference type="EMBL" id="AE014134">
    <property type="protein sequence ID" value="AAN10461.2"/>
    <property type="molecule type" value="Genomic_DNA"/>
</dbReference>
<dbReference type="RefSeq" id="NP_722729.2">
    <property type="nucleotide sequence ID" value="NM_164437.2"/>
</dbReference>
<dbReference type="SMR" id="P58954"/>
<dbReference type="FunCoup" id="P58954">
    <property type="interactions" value="9"/>
</dbReference>
<dbReference type="STRING" id="7227.FBpp0077568"/>
<dbReference type="GlyCosmos" id="P58954">
    <property type="glycosylation" value="1 site, No reported glycans"/>
</dbReference>
<dbReference type="GlyGen" id="P58954">
    <property type="glycosylation" value="1 site"/>
</dbReference>
<dbReference type="PaxDb" id="7227-FBpp0077568"/>
<dbReference type="EnsemblMetazoa" id="FBtr0077902">
    <property type="protein sequence ID" value="FBpp0077568"/>
    <property type="gene ID" value="FBgn0041249"/>
</dbReference>
<dbReference type="GeneID" id="117349"/>
<dbReference type="KEGG" id="dme:Dmel_CG31932"/>
<dbReference type="AGR" id="FB:FBgn0041249"/>
<dbReference type="CTD" id="117349"/>
<dbReference type="FlyBase" id="FBgn0041249">
    <property type="gene designation" value="Gr22f"/>
</dbReference>
<dbReference type="VEuPathDB" id="VectorBase:FBgn0041249"/>
<dbReference type="eggNOG" id="ENOG502T94A">
    <property type="taxonomic scope" value="Eukaryota"/>
</dbReference>
<dbReference type="GeneTree" id="ENSGT00940000170904"/>
<dbReference type="HOGENOM" id="CLU_033758_0_0_1"/>
<dbReference type="InParanoid" id="P58954"/>
<dbReference type="OMA" id="IMHFHTE"/>
<dbReference type="OrthoDB" id="8067175at2759"/>
<dbReference type="PhylomeDB" id="P58954"/>
<dbReference type="BioGRID-ORCS" id="117349">
    <property type="hits" value="0 hits in 1 CRISPR screen"/>
</dbReference>
<dbReference type="GenomeRNAi" id="117349"/>
<dbReference type="PRO" id="PR:P58954"/>
<dbReference type="Proteomes" id="UP000000803">
    <property type="component" value="Chromosome 2L"/>
</dbReference>
<dbReference type="Bgee" id="FBgn0041249">
    <property type="expression patterns" value="Expressed in mouthpart and 2 other cell types or tissues"/>
</dbReference>
<dbReference type="GO" id="GO:0030424">
    <property type="term" value="C:axon"/>
    <property type="evidence" value="ECO:0000318"/>
    <property type="project" value="GO_Central"/>
</dbReference>
<dbReference type="GO" id="GO:0030425">
    <property type="term" value="C:dendrite"/>
    <property type="evidence" value="ECO:0000318"/>
    <property type="project" value="GO_Central"/>
</dbReference>
<dbReference type="GO" id="GO:0016020">
    <property type="term" value="C:membrane"/>
    <property type="evidence" value="ECO:0000303"/>
    <property type="project" value="UniProtKB"/>
</dbReference>
<dbReference type="GO" id="GO:0043025">
    <property type="term" value="C:neuronal cell body"/>
    <property type="evidence" value="ECO:0000318"/>
    <property type="project" value="GO_Central"/>
</dbReference>
<dbReference type="GO" id="GO:0005886">
    <property type="term" value="C:plasma membrane"/>
    <property type="evidence" value="ECO:0000250"/>
    <property type="project" value="FlyBase"/>
</dbReference>
<dbReference type="GO" id="GO:0015276">
    <property type="term" value="F:ligand-gated monoatomic ion channel activity"/>
    <property type="evidence" value="ECO:0000250"/>
    <property type="project" value="FlyBase"/>
</dbReference>
<dbReference type="GO" id="GO:0008527">
    <property type="term" value="F:taste receptor activity"/>
    <property type="evidence" value="ECO:0000250"/>
    <property type="project" value="FlyBase"/>
</dbReference>
<dbReference type="GO" id="GO:0034220">
    <property type="term" value="P:monoatomic ion transmembrane transport"/>
    <property type="evidence" value="ECO:0000250"/>
    <property type="project" value="FlyBase"/>
</dbReference>
<dbReference type="GO" id="GO:0050909">
    <property type="term" value="P:sensory perception of taste"/>
    <property type="evidence" value="ECO:0000250"/>
    <property type="project" value="FlyBase"/>
</dbReference>
<dbReference type="GO" id="GO:0007165">
    <property type="term" value="P:signal transduction"/>
    <property type="evidence" value="ECO:0007669"/>
    <property type="project" value="UniProtKB-KW"/>
</dbReference>
<dbReference type="InterPro" id="IPR013604">
    <property type="entry name" value="7TM_chemorcpt"/>
</dbReference>
<dbReference type="PANTHER" id="PTHR21143:SF131">
    <property type="entry name" value="GUSTATORY AND ODORANT RECEPTOR 63A-RELATED"/>
    <property type="match status" value="1"/>
</dbReference>
<dbReference type="PANTHER" id="PTHR21143">
    <property type="entry name" value="INVERTEBRATE GUSTATORY RECEPTOR"/>
    <property type="match status" value="1"/>
</dbReference>
<dbReference type="Pfam" id="PF08395">
    <property type="entry name" value="7tm_7"/>
    <property type="match status" value="1"/>
</dbReference>
<sequence length="378" mass="44422">MKMFQPRRGFSCHLAWFMLQTTLYASWLLGLFPFTFDSRRKQLKRSRWLLLYGFVLHSLAMCLAMSSHLASKQRRKYNAFERNPLLEKIYMQFQVTTFFTISVLLLMNVWKSNTVRKIANELLTLEGQVKDLLTLKNCPNFNCFVIKKHVAAIGQFVISIYFCLCQENSYPKILKILCCLPSVGLQLIIMHFHTEIILVYRYVWLVNETLEDSHHLSSSRIHALASLYDRLLKLSELVVACNDLQLILMLIIYLIGNTVQIFFLIVLGVSMNKRYIYLVASPQLIINFWDFWLNIVVCDLAGKCGDQTSKVLKLFTDLEHDDEELERSLNEFAWLCTHRKFRFQLCGLFSINHNMGFQMIITSFLYLVYLLQFDFMNL</sequence>
<protein>
    <recommendedName>
        <fullName>Putative gustatory receptor 22f</fullName>
    </recommendedName>
</protein>
<comment type="function">
    <text evidence="1">Probable gustatory receptor which mediates acceptance or avoidance behavior, depending on its substrates.</text>
</comment>
<comment type="subcellular location">
    <subcellularLocation>
        <location evidence="1">Cell membrane</location>
        <topology evidence="1">Multi-pass membrane protein</topology>
    </subcellularLocation>
</comment>
<comment type="tissue specificity">
    <text evidence="3 4">Taste bristles in the foreleg and labial palps.</text>
</comment>
<comment type="similarity">
    <text evidence="5">Belongs to the insect chemoreceptor superfamily. Gustatory receptor (GR) family. Gr22e subfamily.</text>
</comment>
<name>GR22F_DROME</name>
<accession>P58954</accession>
<feature type="chain" id="PRO_0000216498" description="Putative gustatory receptor 22f">
    <location>
        <begin position="1"/>
        <end position="378"/>
    </location>
</feature>
<feature type="topological domain" description="Cytoplasmic" evidence="1">
    <location>
        <begin position="1"/>
        <end position="13"/>
    </location>
</feature>
<feature type="transmembrane region" description="Helical; Name=1" evidence="2">
    <location>
        <begin position="14"/>
        <end position="34"/>
    </location>
</feature>
<feature type="topological domain" description="Extracellular" evidence="1">
    <location>
        <begin position="35"/>
        <end position="48"/>
    </location>
</feature>
<feature type="transmembrane region" description="Helical; Name=2" evidence="2">
    <location>
        <begin position="49"/>
        <end position="69"/>
    </location>
</feature>
<feature type="topological domain" description="Cytoplasmic" evidence="1">
    <location>
        <begin position="70"/>
        <end position="88"/>
    </location>
</feature>
<feature type="transmembrane region" description="Helical; Name=3" evidence="2">
    <location>
        <begin position="89"/>
        <end position="109"/>
    </location>
</feature>
<feature type="topological domain" description="Extracellular" evidence="1">
    <location>
        <begin position="110"/>
        <end position="143"/>
    </location>
</feature>
<feature type="transmembrane region" description="Helical; Name=4" evidence="2">
    <location>
        <begin position="144"/>
        <end position="164"/>
    </location>
</feature>
<feature type="topological domain" description="Cytoplasmic" evidence="1">
    <location>
        <begin position="165"/>
        <end position="178"/>
    </location>
</feature>
<feature type="transmembrane region" description="Helical; Name=5" evidence="2">
    <location>
        <begin position="179"/>
        <end position="199"/>
    </location>
</feature>
<feature type="topological domain" description="Extracellular" evidence="1">
    <location>
        <begin position="200"/>
        <end position="245"/>
    </location>
</feature>
<feature type="transmembrane region" description="Helical; Name=6" evidence="2">
    <location>
        <begin position="246"/>
        <end position="266"/>
    </location>
</feature>
<feature type="topological domain" description="Cytoplasmic" evidence="1">
    <location>
        <begin position="267"/>
        <end position="354"/>
    </location>
</feature>
<feature type="transmembrane region" description="Helical; Name=7" evidence="2">
    <location>
        <begin position="355"/>
        <end position="375"/>
    </location>
</feature>
<feature type="topological domain" description="Extracellular" evidence="1">
    <location>
        <begin position="376"/>
        <end position="378"/>
    </location>
</feature>
<feature type="glycosylation site" description="N-linked (GlcNAc...) asparagine" evidence="2">
    <location>
        <position position="207"/>
    </location>
</feature>
<keyword id="KW-1003">Cell membrane</keyword>
<keyword id="KW-0325">Glycoprotein</keyword>
<keyword id="KW-0472">Membrane</keyword>
<keyword id="KW-0675">Receptor</keyword>
<keyword id="KW-1185">Reference proteome</keyword>
<keyword id="KW-0807">Transducer</keyword>
<keyword id="KW-0812">Transmembrane</keyword>
<keyword id="KW-1133">Transmembrane helix</keyword>